<evidence type="ECO:0000250" key="1">
    <source>
        <dbReference type="UniProtKB" id="I6Y9Q3"/>
    </source>
</evidence>
<evidence type="ECO:0000250" key="2">
    <source>
        <dbReference type="UniProtKB" id="O34002"/>
    </source>
</evidence>
<evidence type="ECO:0000269" key="3">
    <source>
    </source>
</evidence>
<evidence type="ECO:0000269" key="4">
    <source>
    </source>
</evidence>
<evidence type="ECO:0000269" key="5">
    <source>
    </source>
</evidence>
<evidence type="ECO:0000269" key="6">
    <source>
    </source>
</evidence>
<evidence type="ECO:0000269" key="7">
    <source>
    </source>
</evidence>
<evidence type="ECO:0000269" key="8">
    <source>
    </source>
</evidence>
<evidence type="ECO:0000269" key="9">
    <source>
    </source>
</evidence>
<evidence type="ECO:0000303" key="10">
    <source>
    </source>
</evidence>
<evidence type="ECO:0000303" key="11">
    <source>
    </source>
</evidence>
<evidence type="ECO:0000305" key="12"/>
<evidence type="ECO:0000305" key="13">
    <source>
    </source>
</evidence>
<evidence type="ECO:0000305" key="14">
    <source>
    </source>
</evidence>
<evidence type="ECO:0000305" key="15">
    <source>
    </source>
</evidence>
<sequence>MSDTTILQNSTHVIKPKKSVALSGVPAGNTALCTVGKSGNDLHYRGYDILDLAKHCEFEEVAHLLIHGKLPTRDELAAYKTKLKALRGLPANVRTVLEALPAASHPMDVMRTGVSALGCTLPEKEGHTVSGARDIADKLLASLSSILLYWYHYSHNGERIQPETDDDSIGGHFLHLLHGEKPSQSWEKAMHISLVLYAEHEFNASTFTSRVIAGTGSDMYSAIIGAIGALRGPKHGGANEVSLEIQQRYETPDEAEADIRKRVENKEVVIGFGHPVYTIADPRHQVIKRVAKQLSQEGGSLKMYNIADRLETVMWESKKMFPNLDWFSAVSYNMMGVPTEMFTPLFVIARVTGWAAHIIEQRQDNKIIRPSANYVGPEDRPFVALDKRQ</sequence>
<name>PRPC_ECOLI</name>
<accession>P31660</accession>
<accession>P77217</accession>
<accession>Q2MC91</accession>
<comment type="function">
    <text evidence="3 6 7 8 9">Involved in the catabolism of short chain fatty acids (SCFA) via the tricarboxylic acid (TCA)(acetyl degradation route) and via the 2-methylcitrate cycle I (propionate degradation route). Catalyzes the Claisen condensation of propionyl-CoA and oxaloacetate (OAA) to yield 2-methylcitrate (2-MC) and CoA. Also catalyzes the condensation of oxaloacetate with acetyl-CoA to yield citrate but with a lower specificity.</text>
</comment>
<comment type="catalytic activity">
    <reaction evidence="3 8 9">
        <text>propanoyl-CoA + oxaloacetate + H2O = (2S,3S)-2-methylcitrate + CoA + H(+)</text>
        <dbReference type="Rhea" id="RHEA:23780"/>
        <dbReference type="ChEBI" id="CHEBI:15377"/>
        <dbReference type="ChEBI" id="CHEBI:15378"/>
        <dbReference type="ChEBI" id="CHEBI:16452"/>
        <dbReference type="ChEBI" id="CHEBI:57287"/>
        <dbReference type="ChEBI" id="CHEBI:57392"/>
        <dbReference type="ChEBI" id="CHEBI:58853"/>
        <dbReference type="EC" id="2.3.3.5"/>
    </reaction>
</comment>
<comment type="catalytic activity">
    <reaction evidence="8 9">
        <text>oxaloacetate + acetyl-CoA + H2O = citrate + CoA + H(+)</text>
        <dbReference type="Rhea" id="RHEA:16845"/>
        <dbReference type="ChEBI" id="CHEBI:15377"/>
        <dbReference type="ChEBI" id="CHEBI:15378"/>
        <dbReference type="ChEBI" id="CHEBI:16452"/>
        <dbReference type="ChEBI" id="CHEBI:16947"/>
        <dbReference type="ChEBI" id="CHEBI:57287"/>
        <dbReference type="ChEBI" id="CHEBI:57288"/>
        <dbReference type="EC" id="2.3.3.16"/>
    </reaction>
</comment>
<comment type="biophysicochemical properties">
    <kinetics>
        <KM evidence="9">5 uM for oxaloacetate (at pH 8 and 35 degrees Celsius)</KM>
        <KM evidence="8">17 uM for propionyl-CoA (at pH 7.4)</KM>
        <KM evidence="9">37 uM for propionyl-CoA (at pH 8 and 35 degrees Celsius)</KM>
        <KM evidence="9">101 uM for acetyl-CoA (at pH 8 and 35 degrees Celsius)</KM>
        <Vmax evidence="9">0.11 umol/min/mg enzyme with acetyl-CoA as substrate (at pH 8 and 35 degrees Celsius)</Vmax>
        <Vmax evidence="9">0.33 umol/min/mg enzyme with propionyl-CoA as substrate (at pH 8 and 35 degrees Celsius)</Vmax>
    </kinetics>
    <phDependence>
        <text evidence="8">Optimum pH is 9.</text>
    </phDependence>
    <temperatureDependence>
        <text evidence="8">Optimum temperature is between 45 and 50 degrees Celsius.</text>
    </temperatureDependence>
</comment>
<comment type="pathway">
    <text evidence="15">Organic acid metabolism; propanoate degradation.</text>
</comment>
<comment type="pathway">
    <text evidence="15">Carbohydrate metabolism; tricarboxylic acid cycle; isocitrate from oxaloacetate: step 1/2.</text>
</comment>
<comment type="subunit">
    <text evidence="9">Homodimer.</text>
</comment>
<comment type="induction">
    <text evidence="3 4 5 8 9">By propionate, but not acetate or glucose. Expression of prpBCDE operon is regulated by PrpR, CRP and a variety of sugars such as arabinose, galactose, glucose mannose and xylose.</text>
</comment>
<comment type="similarity">
    <text evidence="12">Belongs to the citrate synthase family.</text>
</comment>
<comment type="caution">
    <text evidence="13 14">There is uncertainty concerning the 2-methylcitrate stereochemistry. Brock et al. report a (2S,3S) stereochemistry, but Reddick et al. determined that the 2-methylcitrate has either (2S,3R) or (2R,3S) stereochemistry.</text>
</comment>
<reference key="1">
    <citation type="submission" date="1997-01" db="EMBL/GenBank/DDBJ databases">
        <title>Sequence of minutes 4-25 of Escherichia coli.</title>
        <authorList>
            <person name="Chung E."/>
            <person name="Allen E."/>
            <person name="Araujo R."/>
            <person name="Aparicio A.M."/>
            <person name="Davis K."/>
            <person name="Duncan M."/>
            <person name="Federspiel N."/>
            <person name="Hyman R."/>
            <person name="Kalman S."/>
            <person name="Komp C."/>
            <person name="Kurdi O."/>
            <person name="Lew H."/>
            <person name="Lin D."/>
            <person name="Namath A."/>
            <person name="Oefner P."/>
            <person name="Roberts D."/>
            <person name="Schramm S."/>
            <person name="Davis R.W."/>
        </authorList>
    </citation>
    <scope>NUCLEOTIDE SEQUENCE [LARGE SCALE GENOMIC DNA]</scope>
    <source>
        <strain>K12 / MG1655 / ATCC 47076</strain>
    </source>
</reference>
<reference key="2">
    <citation type="journal article" date="1997" name="Science">
        <title>The complete genome sequence of Escherichia coli K-12.</title>
        <authorList>
            <person name="Blattner F.R."/>
            <person name="Plunkett G. III"/>
            <person name="Bloch C.A."/>
            <person name="Perna N.T."/>
            <person name="Burland V."/>
            <person name="Riley M."/>
            <person name="Collado-Vides J."/>
            <person name="Glasner J.D."/>
            <person name="Rode C.K."/>
            <person name="Mayhew G.F."/>
            <person name="Gregor J."/>
            <person name="Davis N.W."/>
            <person name="Kirkpatrick H.A."/>
            <person name="Goeden M.A."/>
            <person name="Rose D.J."/>
            <person name="Mau B."/>
            <person name="Shao Y."/>
        </authorList>
    </citation>
    <scope>NUCLEOTIDE SEQUENCE [LARGE SCALE GENOMIC DNA]</scope>
    <source>
        <strain>K12 / MG1655 / ATCC 47076</strain>
    </source>
</reference>
<reference key="3">
    <citation type="journal article" date="2006" name="Mol. Syst. Biol.">
        <title>Highly accurate genome sequences of Escherichia coli K-12 strains MG1655 and W3110.</title>
        <authorList>
            <person name="Hayashi K."/>
            <person name="Morooka N."/>
            <person name="Yamamoto Y."/>
            <person name="Fujita K."/>
            <person name="Isono K."/>
            <person name="Choi S."/>
            <person name="Ohtsubo E."/>
            <person name="Baba T."/>
            <person name="Wanner B.L."/>
            <person name="Mori H."/>
            <person name="Horiuchi T."/>
        </authorList>
    </citation>
    <scope>NUCLEOTIDE SEQUENCE [LARGE SCALE GENOMIC DNA]</scope>
    <source>
        <strain>K12 / W3110 / ATCC 27325 / DSM 5911</strain>
    </source>
</reference>
<reference key="4">
    <citation type="journal article" date="1993" name="Eur. J. Biochem.">
        <title>Does Escherichia coli possess a second citrate synthase gene?</title>
        <authorList>
            <person name="Patton A.J."/>
            <person name="Hough D.W."/>
            <person name="Towner P."/>
            <person name="Danson M.J."/>
        </authorList>
    </citation>
    <scope>PROTEIN SEQUENCE OF 18-54</scope>
    <scope>FUNCTION</scope>
</reference>
<reference key="5">
    <citation type="journal article" date="1997" name="Arch. Microbiol.">
        <title>Propionate oxidation in Escherichia coli: evidence for operation of a methylcitrate cycle in bacteria.</title>
        <authorList>
            <person name="Textor S."/>
            <person name="Wendisch V.F."/>
            <person name="de Graaf A.A."/>
            <person name="Mueller U."/>
            <person name="Linder M.I."/>
            <person name="Linder D."/>
            <person name="Buckel W."/>
        </authorList>
    </citation>
    <scope>FUNCTION</scope>
    <scope>CATALYTIC ACTIVITY</scope>
    <scope>BIOPHYSICOCHEMICAL PROPERTIES</scope>
    <scope>INDUCTION</scope>
</reference>
<reference key="6">
    <citation type="journal article" date="1998" name="Microbiology">
        <title>Citrate synthase and 2-methylcitrate synthase: structural, functional and evolutionary relationships.</title>
        <authorList>
            <person name="Gerike U."/>
            <person name="Hough D.W."/>
            <person name="Russell N.J."/>
            <person name="Dyall-Smith M.L."/>
            <person name="Danson M.J."/>
        </authorList>
    </citation>
    <scope>FUNCTION</scope>
    <scope>CATALYTIC ACTIVITY</scope>
    <scope>BIOPHYSICOCHEMICAL PROPERTIES</scope>
    <scope>INDUCTION</scope>
    <scope>SUBSTRATE SPECIFICITY</scope>
    <scope>SUBUNIT</scope>
</reference>
<reference key="7">
    <citation type="journal article" date="2002" name="Eur. J. Biochem.">
        <title>Oxidation of propionate to pyruvate in Escherichia coli. Involvement of methylcitrate dehydratase and aconitase.</title>
        <authorList>
            <person name="Brock M."/>
            <person name="Maerker C."/>
            <person name="Schuetz A."/>
            <person name="Voelker U."/>
            <person name="Buckel W."/>
        </authorList>
    </citation>
    <scope>FUNCTION</scope>
    <scope>CATALYTIC ACTIVITY</scope>
    <scope>INDUCTION</scope>
</reference>
<reference key="8">
    <citation type="journal article" date="2005" name="J. Bacteriol.">
        <title>Catabolite repression of the propionate catabolic genes in Escherichia coli and Salmonella enterica: evidence for involvement of the cyclic AMP receptor protein.</title>
        <authorList>
            <person name="Lee S.K."/>
            <person name="Newman J.D."/>
            <person name="Keasling J.D."/>
        </authorList>
    </citation>
    <scope>INDUCTION</scope>
</reference>
<reference key="9">
    <citation type="journal article" date="2012" name="Gene">
        <title>The mechanism of sugar-mediated catabolite repression of the propionate catabolic genes in Escherichia coli.</title>
        <authorList>
            <person name="Park J.M."/>
            <person name="Vinuselvi P."/>
            <person name="Lee S.K."/>
        </authorList>
    </citation>
    <scope>INDUCTION</scope>
</reference>
<reference key="10">
    <citation type="journal article" date="2017" name="Biochemistry">
        <title>First biochemical characterization of a methylcitric acid cycle from Bacillus subtilis strain 168.</title>
        <authorList>
            <person name="Reddick J.J."/>
            <person name="Sirkisoon S."/>
            <person name="Dahal R.A."/>
            <person name="Hardesty G."/>
            <person name="Hage N.E."/>
            <person name="Booth W.T."/>
            <person name="Quattlebaum A.L."/>
            <person name="Mills S.N."/>
            <person name="Meadows V.G."/>
            <person name="Adams S.L.H."/>
            <person name="Doyle J.S."/>
            <person name="Kiel B.E."/>
        </authorList>
    </citation>
    <scope>FUNCTION</scope>
    <scope>DISCUSSION OF STEREOCHEMISTRY</scope>
</reference>
<keyword id="KW-0903">Direct protein sequencing</keyword>
<keyword id="KW-1185">Reference proteome</keyword>
<keyword id="KW-0808">Transferase</keyword>
<keyword id="KW-0816">Tricarboxylic acid cycle</keyword>
<protein>
    <recommendedName>
        <fullName evidence="11">2-methylcitrate synthase</fullName>
        <shortName evidence="11">2-MCS</shortName>
        <shortName evidence="11">MCS</shortName>
        <ecNumber evidence="3 8 9">2.3.3.5</ecNumber>
    </recommendedName>
    <alternativeName>
        <fullName evidence="13">(2S,3S)-2-methylcitrate synthase</fullName>
    </alternativeName>
    <alternativeName>
        <fullName evidence="10">Citrate synthase</fullName>
        <ecNumber evidence="8 9">2.3.3.16</ecNumber>
    </alternativeName>
</protein>
<proteinExistence type="evidence at protein level"/>
<gene>
    <name evidence="11" type="primary">prpC</name>
    <name type="synonym">yahS</name>
    <name type="synonym">yzzD</name>
    <name type="ordered locus">b0333</name>
    <name type="ordered locus">JW0324</name>
</gene>
<dbReference type="EC" id="2.3.3.5" evidence="3 8 9"/>
<dbReference type="EC" id="2.3.3.16" evidence="8 9"/>
<dbReference type="EMBL" id="U73857">
    <property type="protein sequence ID" value="AAB18057.1"/>
    <property type="molecule type" value="Genomic_DNA"/>
</dbReference>
<dbReference type="EMBL" id="U00096">
    <property type="protein sequence ID" value="AAC73436.1"/>
    <property type="molecule type" value="Genomic_DNA"/>
</dbReference>
<dbReference type="EMBL" id="AP009048">
    <property type="protein sequence ID" value="BAE76115.1"/>
    <property type="molecule type" value="Genomic_DNA"/>
</dbReference>
<dbReference type="PIR" id="E64760">
    <property type="entry name" value="E64760"/>
</dbReference>
<dbReference type="RefSeq" id="NP_414867.1">
    <property type="nucleotide sequence ID" value="NC_000913.3"/>
</dbReference>
<dbReference type="RefSeq" id="WP_001285927.1">
    <property type="nucleotide sequence ID" value="NZ_SSZK01000063.1"/>
</dbReference>
<dbReference type="SMR" id="P31660"/>
<dbReference type="BioGRID" id="4259809">
    <property type="interactions" value="10"/>
</dbReference>
<dbReference type="DIP" id="DIP-10579N"/>
<dbReference type="FunCoup" id="P31660">
    <property type="interactions" value="527"/>
</dbReference>
<dbReference type="IntAct" id="P31660">
    <property type="interactions" value="2"/>
</dbReference>
<dbReference type="STRING" id="511145.b0333"/>
<dbReference type="jPOST" id="P31660"/>
<dbReference type="PaxDb" id="511145-b0333"/>
<dbReference type="EnsemblBacteria" id="AAC73436">
    <property type="protein sequence ID" value="AAC73436"/>
    <property type="gene ID" value="b0333"/>
</dbReference>
<dbReference type="GeneID" id="947528"/>
<dbReference type="KEGG" id="ecj:JW0324"/>
<dbReference type="KEGG" id="eco:b0333"/>
<dbReference type="KEGG" id="ecoc:C3026_01630"/>
<dbReference type="KEGG" id="ecoc:C3026_24800"/>
<dbReference type="PATRIC" id="fig|1411691.4.peg.1944"/>
<dbReference type="EchoBASE" id="EB1706"/>
<dbReference type="eggNOG" id="COG0372">
    <property type="taxonomic scope" value="Bacteria"/>
</dbReference>
<dbReference type="HOGENOM" id="CLU_025068_2_1_6"/>
<dbReference type="InParanoid" id="P31660"/>
<dbReference type="OMA" id="NEAAMDM"/>
<dbReference type="OrthoDB" id="9800864at2"/>
<dbReference type="PhylomeDB" id="P31660"/>
<dbReference type="BioCyc" id="EcoCyc:G6198-MONOMER"/>
<dbReference type="BioCyc" id="MetaCyc:G6198-MONOMER"/>
<dbReference type="BRENDA" id="2.3.3.5">
    <property type="organism ID" value="2026"/>
</dbReference>
<dbReference type="UniPathway" id="UPA00223">
    <property type="reaction ID" value="UER00717"/>
</dbReference>
<dbReference type="UniPathway" id="UPA00946"/>
<dbReference type="PRO" id="PR:P31660"/>
<dbReference type="Proteomes" id="UP000000625">
    <property type="component" value="Chromosome"/>
</dbReference>
<dbReference type="GO" id="GO:0005737">
    <property type="term" value="C:cytoplasm"/>
    <property type="evidence" value="ECO:0007669"/>
    <property type="project" value="InterPro"/>
</dbReference>
<dbReference type="GO" id="GO:0050440">
    <property type="term" value="F:2-methylcitrate synthase activity"/>
    <property type="evidence" value="ECO:0000314"/>
    <property type="project" value="UniProtKB"/>
</dbReference>
<dbReference type="GO" id="GO:0004108">
    <property type="term" value="F:citrate (Si)-synthase activity"/>
    <property type="evidence" value="ECO:0000314"/>
    <property type="project" value="UniProtKB"/>
</dbReference>
<dbReference type="GO" id="GO:0042803">
    <property type="term" value="F:protein homodimerization activity"/>
    <property type="evidence" value="ECO:0000314"/>
    <property type="project" value="EcoCyc"/>
</dbReference>
<dbReference type="GO" id="GO:0005975">
    <property type="term" value="P:carbohydrate metabolic process"/>
    <property type="evidence" value="ECO:0000318"/>
    <property type="project" value="GO_Central"/>
</dbReference>
<dbReference type="GO" id="GO:0019679">
    <property type="term" value="P:propionate metabolic process, methylcitrate cycle"/>
    <property type="evidence" value="ECO:0000314"/>
    <property type="project" value="UniProtKB"/>
</dbReference>
<dbReference type="GO" id="GO:0006099">
    <property type="term" value="P:tricarboxylic acid cycle"/>
    <property type="evidence" value="ECO:0000318"/>
    <property type="project" value="GO_Central"/>
</dbReference>
<dbReference type="CDD" id="cd06117">
    <property type="entry name" value="Ec2MCS_like_1"/>
    <property type="match status" value="1"/>
</dbReference>
<dbReference type="FunFam" id="1.10.230.10:FF:000003">
    <property type="entry name" value="Citrate synthase"/>
    <property type="match status" value="1"/>
</dbReference>
<dbReference type="FunFam" id="1.10.580.10:FF:000004">
    <property type="entry name" value="Citrate synthase"/>
    <property type="match status" value="1"/>
</dbReference>
<dbReference type="Gene3D" id="1.10.580.10">
    <property type="entry name" value="Citrate Synthase, domain 1"/>
    <property type="match status" value="1"/>
</dbReference>
<dbReference type="Gene3D" id="1.10.230.10">
    <property type="entry name" value="Cytochrome P450-Terp, domain 2"/>
    <property type="match status" value="1"/>
</dbReference>
<dbReference type="InterPro" id="IPR011278">
    <property type="entry name" value="2-MeCitrate/Citrate_synth_II"/>
</dbReference>
<dbReference type="InterPro" id="IPR016142">
    <property type="entry name" value="Citrate_synth-like_lrg_a-sub"/>
</dbReference>
<dbReference type="InterPro" id="IPR016143">
    <property type="entry name" value="Citrate_synth-like_sm_a-sub"/>
</dbReference>
<dbReference type="InterPro" id="IPR002020">
    <property type="entry name" value="Citrate_synthase"/>
</dbReference>
<dbReference type="InterPro" id="IPR019810">
    <property type="entry name" value="Citrate_synthase_AS"/>
</dbReference>
<dbReference type="InterPro" id="IPR024176">
    <property type="entry name" value="Citrate_synthase_bac-typ"/>
</dbReference>
<dbReference type="InterPro" id="IPR036969">
    <property type="entry name" value="Citrate_synthase_sf"/>
</dbReference>
<dbReference type="NCBIfam" id="TIGR01800">
    <property type="entry name" value="cit_synth_II"/>
    <property type="match status" value="1"/>
</dbReference>
<dbReference type="NCBIfam" id="NF009006">
    <property type="entry name" value="PRK12351.1"/>
    <property type="match status" value="1"/>
</dbReference>
<dbReference type="PANTHER" id="PTHR11739">
    <property type="entry name" value="CITRATE SYNTHASE"/>
    <property type="match status" value="1"/>
</dbReference>
<dbReference type="PANTHER" id="PTHR11739:SF25">
    <property type="entry name" value="CITRATE SYNTHASE-RELATED PROTEIN DDB_G0287281"/>
    <property type="match status" value="1"/>
</dbReference>
<dbReference type="Pfam" id="PF00285">
    <property type="entry name" value="Citrate_synt"/>
    <property type="match status" value="1"/>
</dbReference>
<dbReference type="PIRSF" id="PIRSF001369">
    <property type="entry name" value="Citrate_synth"/>
    <property type="match status" value="1"/>
</dbReference>
<dbReference type="PRINTS" id="PR00143">
    <property type="entry name" value="CITRTSNTHASE"/>
</dbReference>
<dbReference type="SUPFAM" id="SSF48256">
    <property type="entry name" value="Citrate synthase"/>
    <property type="match status" value="1"/>
</dbReference>
<dbReference type="PROSITE" id="PS00480">
    <property type="entry name" value="CITRATE_SYNTHASE"/>
    <property type="match status" value="1"/>
</dbReference>
<organism>
    <name type="scientific">Escherichia coli (strain K12)</name>
    <dbReference type="NCBI Taxonomy" id="83333"/>
    <lineage>
        <taxon>Bacteria</taxon>
        <taxon>Pseudomonadati</taxon>
        <taxon>Pseudomonadota</taxon>
        <taxon>Gammaproteobacteria</taxon>
        <taxon>Enterobacterales</taxon>
        <taxon>Enterobacteriaceae</taxon>
        <taxon>Escherichia</taxon>
    </lineage>
</organism>
<feature type="chain" id="PRO_0000169981" description="2-methylcitrate synthase">
    <location>
        <begin position="1"/>
        <end position="389"/>
    </location>
</feature>
<feature type="active site" evidence="2">
    <location>
        <position position="235"/>
    </location>
</feature>
<feature type="active site" evidence="2">
    <location>
        <position position="274"/>
    </location>
</feature>
<feature type="active site" evidence="2">
    <location>
        <position position="325"/>
    </location>
</feature>
<feature type="binding site" evidence="1">
    <location>
        <position position="82"/>
    </location>
    <ligand>
        <name>substrate</name>
    </ligand>
</feature>
<feature type="binding site" evidence="1">
    <location>
        <position position="200"/>
    </location>
    <ligand>
        <name>substrate</name>
    </ligand>
</feature>
<feature type="binding site" evidence="2">
    <location>
        <begin position="268"/>
        <end position="272"/>
    </location>
    <ligand>
        <name>CoA</name>
        <dbReference type="ChEBI" id="CHEBI:57287"/>
    </ligand>
</feature>
<feature type="binding site" evidence="1">
    <location>
        <position position="283"/>
    </location>
    <ligand>
        <name>substrate</name>
    </ligand>
</feature>
<feature type="binding site" evidence="1">
    <location>
        <position position="350"/>
    </location>
    <ligand>
        <name>substrate</name>
    </ligand>
</feature>
<feature type="binding site" evidence="1">
    <location>
        <position position="369"/>
    </location>
    <ligand>
        <name>substrate</name>
    </ligand>
</feature>